<proteinExistence type="inferred from homology"/>
<accession>Q1GNT5</accession>
<comment type="function">
    <text evidence="1">Catalyzes the formation of 6,7-dimethyl-8-ribityllumazine by condensation of 5-amino-6-(D-ribitylamino)uracil with 3,4-dihydroxy-2-butanone 4-phosphate. This is the penultimate step in the biosynthesis of riboflavin.</text>
</comment>
<comment type="catalytic activity">
    <reaction evidence="1">
        <text>(2S)-2-hydroxy-3-oxobutyl phosphate + 5-amino-6-(D-ribitylamino)uracil = 6,7-dimethyl-8-(1-D-ribityl)lumazine + phosphate + 2 H2O + H(+)</text>
        <dbReference type="Rhea" id="RHEA:26152"/>
        <dbReference type="ChEBI" id="CHEBI:15377"/>
        <dbReference type="ChEBI" id="CHEBI:15378"/>
        <dbReference type="ChEBI" id="CHEBI:15934"/>
        <dbReference type="ChEBI" id="CHEBI:43474"/>
        <dbReference type="ChEBI" id="CHEBI:58201"/>
        <dbReference type="ChEBI" id="CHEBI:58830"/>
        <dbReference type="EC" id="2.5.1.78"/>
    </reaction>
</comment>
<comment type="pathway">
    <text evidence="1">Cofactor biosynthesis; riboflavin biosynthesis; riboflavin from 2-hydroxy-3-oxobutyl phosphate and 5-amino-6-(D-ribitylamino)uracil: step 1/2.</text>
</comment>
<comment type="similarity">
    <text evidence="1">Belongs to the DMRL synthase family.</text>
</comment>
<keyword id="KW-1185">Reference proteome</keyword>
<keyword id="KW-0686">Riboflavin biosynthesis</keyword>
<keyword id="KW-0808">Transferase</keyword>
<organism>
    <name type="scientific">Sphingopyxis alaskensis (strain DSM 13593 / LMG 18877 / RB2256)</name>
    <name type="common">Sphingomonas alaskensis</name>
    <dbReference type="NCBI Taxonomy" id="317655"/>
    <lineage>
        <taxon>Bacteria</taxon>
        <taxon>Pseudomonadati</taxon>
        <taxon>Pseudomonadota</taxon>
        <taxon>Alphaproteobacteria</taxon>
        <taxon>Sphingomonadales</taxon>
        <taxon>Sphingomonadaceae</taxon>
        <taxon>Sphingopyxis</taxon>
    </lineage>
</organism>
<sequence length="141" mass="14844">MAHVLIVEARFYSHLNDMLLDGVRSALDAEGHSHETVTVPGALEVPAAIALAADSGRFDAYVALGVVIRGETYHFEVVSNESARGIMALTLDGLAIGNGILTVENEEQALARADKTRKDKGGEAAKAALAMLALKEQFGIG</sequence>
<feature type="chain" id="PRO_1000098231" description="6,7-dimethyl-8-ribityllumazine synthase">
    <location>
        <begin position="1"/>
        <end position="141"/>
    </location>
</feature>
<feature type="active site" description="Proton donor" evidence="1">
    <location>
        <position position="74"/>
    </location>
</feature>
<feature type="binding site" evidence="1">
    <location>
        <position position="11"/>
    </location>
    <ligand>
        <name>5-amino-6-(D-ribitylamino)uracil</name>
        <dbReference type="ChEBI" id="CHEBI:15934"/>
    </ligand>
</feature>
<feature type="binding site" evidence="1">
    <location>
        <begin position="42"/>
        <end position="44"/>
    </location>
    <ligand>
        <name>5-amino-6-(D-ribitylamino)uracil</name>
        <dbReference type="ChEBI" id="CHEBI:15934"/>
    </ligand>
</feature>
<feature type="binding site" evidence="1">
    <location>
        <begin position="66"/>
        <end position="68"/>
    </location>
    <ligand>
        <name>5-amino-6-(D-ribitylamino)uracil</name>
        <dbReference type="ChEBI" id="CHEBI:15934"/>
    </ligand>
</feature>
<feature type="binding site" evidence="1">
    <location>
        <begin position="71"/>
        <end position="72"/>
    </location>
    <ligand>
        <name>(2S)-2-hydroxy-3-oxobutyl phosphate</name>
        <dbReference type="ChEBI" id="CHEBI:58830"/>
    </ligand>
</feature>
<feature type="binding site" evidence="1">
    <location>
        <position position="98"/>
    </location>
    <ligand>
        <name>5-amino-6-(D-ribitylamino)uracil</name>
        <dbReference type="ChEBI" id="CHEBI:15934"/>
    </ligand>
</feature>
<feature type="binding site" evidence="1">
    <location>
        <position position="112"/>
    </location>
    <ligand>
        <name>(2S)-2-hydroxy-3-oxobutyl phosphate</name>
        <dbReference type="ChEBI" id="CHEBI:58830"/>
    </ligand>
</feature>
<dbReference type="EC" id="2.5.1.78" evidence="1"/>
<dbReference type="EMBL" id="CP000356">
    <property type="protein sequence ID" value="ABF54687.1"/>
    <property type="molecule type" value="Genomic_DNA"/>
</dbReference>
<dbReference type="RefSeq" id="WP_011543251.1">
    <property type="nucleotide sequence ID" value="NC_008048.1"/>
</dbReference>
<dbReference type="SMR" id="Q1GNT5"/>
<dbReference type="STRING" id="317655.Sala_2982"/>
<dbReference type="KEGG" id="sal:Sala_2982"/>
<dbReference type="eggNOG" id="COG0054">
    <property type="taxonomic scope" value="Bacteria"/>
</dbReference>
<dbReference type="HOGENOM" id="CLU_089358_1_2_5"/>
<dbReference type="OrthoDB" id="9809709at2"/>
<dbReference type="UniPathway" id="UPA00275">
    <property type="reaction ID" value="UER00404"/>
</dbReference>
<dbReference type="Proteomes" id="UP000006578">
    <property type="component" value="Chromosome"/>
</dbReference>
<dbReference type="GO" id="GO:0005829">
    <property type="term" value="C:cytosol"/>
    <property type="evidence" value="ECO:0007669"/>
    <property type="project" value="TreeGrafter"/>
</dbReference>
<dbReference type="GO" id="GO:0009349">
    <property type="term" value="C:riboflavin synthase complex"/>
    <property type="evidence" value="ECO:0007669"/>
    <property type="project" value="InterPro"/>
</dbReference>
<dbReference type="GO" id="GO:0000906">
    <property type="term" value="F:6,7-dimethyl-8-ribityllumazine synthase activity"/>
    <property type="evidence" value="ECO:0007669"/>
    <property type="project" value="UniProtKB-UniRule"/>
</dbReference>
<dbReference type="GO" id="GO:0009231">
    <property type="term" value="P:riboflavin biosynthetic process"/>
    <property type="evidence" value="ECO:0007669"/>
    <property type="project" value="UniProtKB-UniRule"/>
</dbReference>
<dbReference type="CDD" id="cd09209">
    <property type="entry name" value="Lumazine_synthase-I"/>
    <property type="match status" value="1"/>
</dbReference>
<dbReference type="Gene3D" id="3.40.50.960">
    <property type="entry name" value="Lumazine/riboflavin synthase"/>
    <property type="match status" value="1"/>
</dbReference>
<dbReference type="HAMAP" id="MF_00178">
    <property type="entry name" value="Lumazine_synth"/>
    <property type="match status" value="1"/>
</dbReference>
<dbReference type="InterPro" id="IPR034964">
    <property type="entry name" value="LS"/>
</dbReference>
<dbReference type="InterPro" id="IPR002180">
    <property type="entry name" value="LS/RS"/>
</dbReference>
<dbReference type="InterPro" id="IPR036467">
    <property type="entry name" value="LS/RS_sf"/>
</dbReference>
<dbReference type="NCBIfam" id="TIGR00114">
    <property type="entry name" value="lumazine-synth"/>
    <property type="match status" value="1"/>
</dbReference>
<dbReference type="PANTHER" id="PTHR21058:SF0">
    <property type="entry name" value="6,7-DIMETHYL-8-RIBITYLLUMAZINE SYNTHASE"/>
    <property type="match status" value="1"/>
</dbReference>
<dbReference type="PANTHER" id="PTHR21058">
    <property type="entry name" value="6,7-DIMETHYL-8-RIBITYLLUMAZINE SYNTHASE DMRL SYNTHASE LUMAZINE SYNTHASE"/>
    <property type="match status" value="1"/>
</dbReference>
<dbReference type="Pfam" id="PF00885">
    <property type="entry name" value="DMRL_synthase"/>
    <property type="match status" value="1"/>
</dbReference>
<dbReference type="SUPFAM" id="SSF52121">
    <property type="entry name" value="Lumazine synthase"/>
    <property type="match status" value="1"/>
</dbReference>
<evidence type="ECO:0000255" key="1">
    <source>
        <dbReference type="HAMAP-Rule" id="MF_00178"/>
    </source>
</evidence>
<protein>
    <recommendedName>
        <fullName evidence="1">6,7-dimethyl-8-ribityllumazine synthase</fullName>
        <shortName evidence="1">DMRL synthase</shortName>
        <shortName evidence="1">LS</shortName>
        <shortName evidence="1">Lumazine synthase</shortName>
        <ecNumber evidence="1">2.5.1.78</ecNumber>
    </recommendedName>
</protein>
<name>RISB_SPHAL</name>
<gene>
    <name evidence="1" type="primary">ribH</name>
    <name type="ordered locus">Sala_2982</name>
</gene>
<reference key="1">
    <citation type="journal article" date="2009" name="Proc. Natl. Acad. Sci. U.S.A.">
        <title>The genomic basis of trophic strategy in marine bacteria.</title>
        <authorList>
            <person name="Lauro F.M."/>
            <person name="McDougald D."/>
            <person name="Thomas T."/>
            <person name="Williams T.J."/>
            <person name="Egan S."/>
            <person name="Rice S."/>
            <person name="DeMaere M.Z."/>
            <person name="Ting L."/>
            <person name="Ertan H."/>
            <person name="Johnson J."/>
            <person name="Ferriera S."/>
            <person name="Lapidus A."/>
            <person name="Anderson I."/>
            <person name="Kyrpides N."/>
            <person name="Munk A.C."/>
            <person name="Detter C."/>
            <person name="Han C.S."/>
            <person name="Brown M.V."/>
            <person name="Robb F.T."/>
            <person name="Kjelleberg S."/>
            <person name="Cavicchioli R."/>
        </authorList>
    </citation>
    <scope>NUCLEOTIDE SEQUENCE [LARGE SCALE GENOMIC DNA]</scope>
    <source>
        <strain>DSM 13593 / LMG 18877 / RB2256</strain>
    </source>
</reference>